<proteinExistence type="inferred from homology"/>
<protein>
    <recommendedName>
        <fullName evidence="1">Vitamin B12 import ATP-binding protein BtuD</fullName>
        <ecNumber evidence="1">7.6.2.8</ecNumber>
    </recommendedName>
    <alternativeName>
        <fullName evidence="1">Vitamin B12-transporting ATPase</fullName>
    </alternativeName>
</protein>
<accession>B1LE21</accession>
<sequence length="249" mass="27111">MSIVMQLQDVAESTRLGPLSGEVRAGEILHLVGPNGAGKSTLLARMAGMTSGKGSIQFAGQPLEAWSATKLALHRAYLSQQQTPPFAMPVWHYLTLHQHDKTRTELLNDVAGALALDDKLGRSTNQLSGGEWQRVRLAAVVLQITPQANPAGQLLLLDEPMNSLDVAQQSALDKILSALCQQGLAIVMSSHDLNHTLRHAHRAWLLKGGKMLASGRREEVLTPPNLAQAYGMNFRRLDIEGHRMLISTI</sequence>
<feature type="chain" id="PRO_1000134665" description="Vitamin B12 import ATP-binding protein BtuD">
    <location>
        <begin position="1"/>
        <end position="249"/>
    </location>
</feature>
<feature type="domain" description="ABC transporter" evidence="1">
    <location>
        <begin position="1"/>
        <end position="233"/>
    </location>
</feature>
<feature type="binding site" evidence="1">
    <location>
        <begin position="33"/>
        <end position="40"/>
    </location>
    <ligand>
        <name>ATP</name>
        <dbReference type="ChEBI" id="CHEBI:30616"/>
    </ligand>
</feature>
<dbReference type="EC" id="7.6.2.8" evidence="1"/>
<dbReference type="EMBL" id="CP000970">
    <property type="protein sequence ID" value="ACB16281.1"/>
    <property type="molecule type" value="Genomic_DNA"/>
</dbReference>
<dbReference type="RefSeq" id="WP_000029466.1">
    <property type="nucleotide sequence ID" value="NC_010498.1"/>
</dbReference>
<dbReference type="SMR" id="B1LE21"/>
<dbReference type="GeneID" id="93775873"/>
<dbReference type="KEGG" id="ecm:EcSMS35_1481"/>
<dbReference type="HOGENOM" id="CLU_000604_1_11_6"/>
<dbReference type="Proteomes" id="UP000007011">
    <property type="component" value="Chromosome"/>
</dbReference>
<dbReference type="GO" id="GO:0005886">
    <property type="term" value="C:plasma membrane"/>
    <property type="evidence" value="ECO:0007669"/>
    <property type="project" value="UniProtKB-SubCell"/>
</dbReference>
<dbReference type="GO" id="GO:0015420">
    <property type="term" value="F:ABC-type vitamin B12 transporter activity"/>
    <property type="evidence" value="ECO:0007669"/>
    <property type="project" value="UniProtKB-UniRule"/>
</dbReference>
<dbReference type="GO" id="GO:0005524">
    <property type="term" value="F:ATP binding"/>
    <property type="evidence" value="ECO:0007669"/>
    <property type="project" value="UniProtKB-KW"/>
</dbReference>
<dbReference type="GO" id="GO:0016887">
    <property type="term" value="F:ATP hydrolysis activity"/>
    <property type="evidence" value="ECO:0007669"/>
    <property type="project" value="InterPro"/>
</dbReference>
<dbReference type="CDD" id="cd03214">
    <property type="entry name" value="ABC_Iron-Siderophores_B12_Hemin"/>
    <property type="match status" value="1"/>
</dbReference>
<dbReference type="FunFam" id="3.40.50.300:FF:000462">
    <property type="entry name" value="Vitamin B12 import ATP-binding protein BtuD"/>
    <property type="match status" value="1"/>
</dbReference>
<dbReference type="Gene3D" id="3.40.50.300">
    <property type="entry name" value="P-loop containing nucleotide triphosphate hydrolases"/>
    <property type="match status" value="1"/>
</dbReference>
<dbReference type="HAMAP" id="MF_01005">
    <property type="entry name" value="BtuD"/>
    <property type="match status" value="1"/>
</dbReference>
<dbReference type="InterPro" id="IPR003593">
    <property type="entry name" value="AAA+_ATPase"/>
</dbReference>
<dbReference type="InterPro" id="IPR003439">
    <property type="entry name" value="ABC_transporter-like_ATP-bd"/>
</dbReference>
<dbReference type="InterPro" id="IPR017871">
    <property type="entry name" value="ABC_transporter-like_CS"/>
</dbReference>
<dbReference type="InterPro" id="IPR023693">
    <property type="entry name" value="ABC_transptr_BtuD"/>
</dbReference>
<dbReference type="InterPro" id="IPR050153">
    <property type="entry name" value="Metal_Ion_Import_ABC"/>
</dbReference>
<dbReference type="InterPro" id="IPR027417">
    <property type="entry name" value="P-loop_NTPase"/>
</dbReference>
<dbReference type="NCBIfam" id="NF002981">
    <property type="entry name" value="PRK03695.1"/>
    <property type="match status" value="1"/>
</dbReference>
<dbReference type="PANTHER" id="PTHR42734">
    <property type="entry name" value="METAL TRANSPORT SYSTEM ATP-BINDING PROTEIN TM_0124-RELATED"/>
    <property type="match status" value="1"/>
</dbReference>
<dbReference type="PANTHER" id="PTHR42734:SF18">
    <property type="entry name" value="VITAMIN B12 IMPORT ATP-BINDING PROTEIN BTUD"/>
    <property type="match status" value="1"/>
</dbReference>
<dbReference type="Pfam" id="PF00005">
    <property type="entry name" value="ABC_tran"/>
    <property type="match status" value="1"/>
</dbReference>
<dbReference type="SMART" id="SM00382">
    <property type="entry name" value="AAA"/>
    <property type="match status" value="1"/>
</dbReference>
<dbReference type="SUPFAM" id="SSF52540">
    <property type="entry name" value="P-loop containing nucleoside triphosphate hydrolases"/>
    <property type="match status" value="1"/>
</dbReference>
<dbReference type="PROSITE" id="PS00211">
    <property type="entry name" value="ABC_TRANSPORTER_1"/>
    <property type="match status" value="1"/>
</dbReference>
<dbReference type="PROSITE" id="PS50893">
    <property type="entry name" value="ABC_TRANSPORTER_2"/>
    <property type="match status" value="1"/>
</dbReference>
<comment type="function">
    <text evidence="1">Part of the ABC transporter complex BtuCDF involved in vitamin B12 import. Responsible for energy coupling to the transport system.</text>
</comment>
<comment type="catalytic activity">
    <reaction evidence="1">
        <text>an R-cob(III)alamin(out) + ATP + H2O = an R-cob(III)alamin(in) + ADP + phosphate + H(+)</text>
        <dbReference type="Rhea" id="RHEA:17873"/>
        <dbReference type="ChEBI" id="CHEBI:15377"/>
        <dbReference type="ChEBI" id="CHEBI:15378"/>
        <dbReference type="ChEBI" id="CHEBI:30616"/>
        <dbReference type="ChEBI" id="CHEBI:43474"/>
        <dbReference type="ChEBI" id="CHEBI:140785"/>
        <dbReference type="ChEBI" id="CHEBI:456216"/>
        <dbReference type="EC" id="7.6.2.8"/>
    </reaction>
</comment>
<comment type="subunit">
    <text evidence="1">The complex is composed of two ATP-binding proteins (BtuD), two transmembrane proteins (BtuC) and a solute-binding protein (BtuF).</text>
</comment>
<comment type="subcellular location">
    <subcellularLocation>
        <location evidence="1">Cell inner membrane</location>
        <topology evidence="1">Peripheral membrane protein</topology>
    </subcellularLocation>
</comment>
<comment type="similarity">
    <text evidence="1">Belongs to the ABC transporter superfamily. Vitamin B12 importer (TC 3.A.1.13.1) family.</text>
</comment>
<gene>
    <name evidence="1" type="primary">btuD</name>
    <name type="ordered locus">EcSMS35_1481</name>
</gene>
<keyword id="KW-0067">ATP-binding</keyword>
<keyword id="KW-0997">Cell inner membrane</keyword>
<keyword id="KW-1003">Cell membrane</keyword>
<keyword id="KW-0472">Membrane</keyword>
<keyword id="KW-0547">Nucleotide-binding</keyword>
<keyword id="KW-1278">Translocase</keyword>
<keyword id="KW-0813">Transport</keyword>
<reference key="1">
    <citation type="journal article" date="2008" name="J. Bacteriol.">
        <title>Insights into the environmental resistance gene pool from the genome sequence of the multidrug-resistant environmental isolate Escherichia coli SMS-3-5.</title>
        <authorList>
            <person name="Fricke W.F."/>
            <person name="Wright M.S."/>
            <person name="Lindell A.H."/>
            <person name="Harkins D.M."/>
            <person name="Baker-Austin C."/>
            <person name="Ravel J."/>
            <person name="Stepanauskas R."/>
        </authorList>
    </citation>
    <scope>NUCLEOTIDE SEQUENCE [LARGE SCALE GENOMIC DNA]</scope>
    <source>
        <strain>SMS-3-5 / SECEC</strain>
    </source>
</reference>
<name>BTUD_ECOSM</name>
<evidence type="ECO:0000255" key="1">
    <source>
        <dbReference type="HAMAP-Rule" id="MF_01005"/>
    </source>
</evidence>
<organism>
    <name type="scientific">Escherichia coli (strain SMS-3-5 / SECEC)</name>
    <dbReference type="NCBI Taxonomy" id="439855"/>
    <lineage>
        <taxon>Bacteria</taxon>
        <taxon>Pseudomonadati</taxon>
        <taxon>Pseudomonadota</taxon>
        <taxon>Gammaproteobacteria</taxon>
        <taxon>Enterobacterales</taxon>
        <taxon>Enterobacteriaceae</taxon>
        <taxon>Escherichia</taxon>
    </lineage>
</organism>